<name>Y1013_ARCFU</name>
<proteinExistence type="predicted"/>
<accession>O29249</accession>
<sequence>MPPFFDFLMSAGIAFFVFIISAIILPGFFIWIGLKVVGKERDVLRCGMANFAAVVITAVVAFILHFTPLVLLLPLLAFLIYLYVLKTLLDVGFIEAFAATIIAGVVIFLLAVILLLIFGVWLLFTPPPAQMMHVKF</sequence>
<evidence type="ECO:0000255" key="1"/>
<evidence type="ECO:0000305" key="2"/>
<dbReference type="EMBL" id="AE000782">
    <property type="protein sequence ID" value="AAB90240.1"/>
    <property type="molecule type" value="Genomic_DNA"/>
</dbReference>
<dbReference type="PIR" id="E69376">
    <property type="entry name" value="E69376"/>
</dbReference>
<dbReference type="RefSeq" id="WP_010878513.1">
    <property type="nucleotide sequence ID" value="NC_000917.1"/>
</dbReference>
<dbReference type="SMR" id="O29249"/>
<dbReference type="STRING" id="224325.AF_1013"/>
<dbReference type="PaxDb" id="224325-AF_1013"/>
<dbReference type="EnsemblBacteria" id="AAB90240">
    <property type="protein sequence ID" value="AAB90240"/>
    <property type="gene ID" value="AF_1013"/>
</dbReference>
<dbReference type="KEGG" id="afu:AF_1013"/>
<dbReference type="eggNOG" id="arCOG12200">
    <property type="taxonomic scope" value="Archaea"/>
</dbReference>
<dbReference type="HOGENOM" id="CLU_1954530_0_0_2"/>
<dbReference type="Proteomes" id="UP000002199">
    <property type="component" value="Chromosome"/>
</dbReference>
<dbReference type="GO" id="GO:0005886">
    <property type="term" value="C:plasma membrane"/>
    <property type="evidence" value="ECO:0007669"/>
    <property type="project" value="UniProtKB-SubCell"/>
</dbReference>
<reference key="1">
    <citation type="journal article" date="1997" name="Nature">
        <title>The complete genome sequence of the hyperthermophilic, sulphate-reducing archaeon Archaeoglobus fulgidus.</title>
        <authorList>
            <person name="Klenk H.-P."/>
            <person name="Clayton R.A."/>
            <person name="Tomb J.-F."/>
            <person name="White O."/>
            <person name="Nelson K.E."/>
            <person name="Ketchum K.A."/>
            <person name="Dodson R.J."/>
            <person name="Gwinn M.L."/>
            <person name="Hickey E.K."/>
            <person name="Peterson J.D."/>
            <person name="Richardson D.L."/>
            <person name="Kerlavage A.R."/>
            <person name="Graham D.E."/>
            <person name="Kyrpides N.C."/>
            <person name="Fleischmann R.D."/>
            <person name="Quackenbush J."/>
            <person name="Lee N.H."/>
            <person name="Sutton G.G."/>
            <person name="Gill S.R."/>
            <person name="Kirkness E.F."/>
            <person name="Dougherty B.A."/>
            <person name="McKenney K."/>
            <person name="Adams M.D."/>
            <person name="Loftus B.J."/>
            <person name="Peterson S.N."/>
            <person name="Reich C.I."/>
            <person name="McNeil L.K."/>
            <person name="Badger J.H."/>
            <person name="Glodek A."/>
            <person name="Zhou L."/>
            <person name="Overbeek R."/>
            <person name="Gocayne J.D."/>
            <person name="Weidman J.F."/>
            <person name="McDonald L.A."/>
            <person name="Utterback T.R."/>
            <person name="Cotton M.D."/>
            <person name="Spriggs T."/>
            <person name="Artiach P."/>
            <person name="Kaine B.P."/>
            <person name="Sykes S.M."/>
            <person name="Sadow P.W."/>
            <person name="D'Andrea K.P."/>
            <person name="Bowman C."/>
            <person name="Fujii C."/>
            <person name="Garland S.A."/>
            <person name="Mason T.M."/>
            <person name="Olsen G.J."/>
            <person name="Fraser C.M."/>
            <person name="Smith H.O."/>
            <person name="Woese C.R."/>
            <person name="Venter J.C."/>
        </authorList>
    </citation>
    <scope>NUCLEOTIDE SEQUENCE [LARGE SCALE GENOMIC DNA]</scope>
    <source>
        <strain>ATCC 49558 / DSM 4304 / JCM 9628 / NBRC 100126 / VC-16</strain>
    </source>
</reference>
<protein>
    <recommendedName>
        <fullName>Uncharacterized protein AF_1013</fullName>
    </recommendedName>
</protein>
<keyword id="KW-1003">Cell membrane</keyword>
<keyword id="KW-0472">Membrane</keyword>
<keyword id="KW-1185">Reference proteome</keyword>
<keyword id="KW-0812">Transmembrane</keyword>
<keyword id="KW-1133">Transmembrane helix</keyword>
<feature type="chain" id="PRO_0000127952" description="Uncharacterized protein AF_1013">
    <location>
        <begin position="1"/>
        <end position="136"/>
    </location>
</feature>
<feature type="transmembrane region" description="Helical" evidence="1">
    <location>
        <begin position="10"/>
        <end position="32"/>
    </location>
</feature>
<feature type="transmembrane region" description="Helical" evidence="1">
    <location>
        <begin position="44"/>
        <end position="66"/>
    </location>
</feature>
<feature type="transmembrane region" description="Helical" evidence="1">
    <location>
        <begin position="70"/>
        <end position="89"/>
    </location>
</feature>
<feature type="transmembrane region" description="Helical" evidence="1">
    <location>
        <begin position="102"/>
        <end position="124"/>
    </location>
</feature>
<gene>
    <name type="ordered locus">AF_1013</name>
</gene>
<organism>
    <name type="scientific">Archaeoglobus fulgidus (strain ATCC 49558 / DSM 4304 / JCM 9628 / NBRC 100126 / VC-16)</name>
    <dbReference type="NCBI Taxonomy" id="224325"/>
    <lineage>
        <taxon>Archaea</taxon>
        <taxon>Methanobacteriati</taxon>
        <taxon>Methanobacteriota</taxon>
        <taxon>Archaeoglobi</taxon>
        <taxon>Archaeoglobales</taxon>
        <taxon>Archaeoglobaceae</taxon>
        <taxon>Archaeoglobus</taxon>
    </lineage>
</organism>
<comment type="subcellular location">
    <subcellularLocation>
        <location evidence="2">Cell membrane</location>
        <topology evidence="2">Multi-pass membrane protein</topology>
    </subcellularLocation>
</comment>